<gene>
    <name type="primary">CRRSP41</name>
    <name type="ordered locus">At4g20670</name>
    <name type="ORF">F21C20.20</name>
</gene>
<protein>
    <recommendedName>
        <fullName>Cysteine-rich repeat secretory protein 41</fullName>
    </recommendedName>
</protein>
<evidence type="ECO:0000255" key="1"/>
<evidence type="ECO:0000255" key="2">
    <source>
        <dbReference type="PROSITE-ProRule" id="PRU00806"/>
    </source>
</evidence>
<evidence type="ECO:0000305" key="3"/>
<organism>
    <name type="scientific">Arabidopsis thaliana</name>
    <name type="common">Mouse-ear cress</name>
    <dbReference type="NCBI Taxonomy" id="3702"/>
    <lineage>
        <taxon>Eukaryota</taxon>
        <taxon>Viridiplantae</taxon>
        <taxon>Streptophyta</taxon>
        <taxon>Embryophyta</taxon>
        <taxon>Tracheophyta</taxon>
        <taxon>Spermatophyta</taxon>
        <taxon>Magnoliopsida</taxon>
        <taxon>eudicotyledons</taxon>
        <taxon>Gunneridae</taxon>
        <taxon>Pentapetalae</taxon>
        <taxon>rosids</taxon>
        <taxon>malvids</taxon>
        <taxon>Brassicales</taxon>
        <taxon>Brassicaceae</taxon>
        <taxon>Camelineae</taxon>
        <taxon>Arabidopsis</taxon>
    </lineage>
</organism>
<accession>Q9SVI0</accession>
<accession>F4JVM0</accession>
<feature type="signal peptide" evidence="1">
    <location>
        <begin position="1"/>
        <end position="26"/>
    </location>
</feature>
<feature type="chain" id="PRO_0000296169" description="Cysteine-rich repeat secretory protein 41">
    <location>
        <begin position="27"/>
        <end position="266"/>
    </location>
</feature>
<feature type="domain" description="Gnk2-homologous 1" evidence="2">
    <location>
        <begin position="33"/>
        <end position="136"/>
    </location>
</feature>
<feature type="domain" description="Gnk2-homologous 2" evidence="2">
    <location>
        <begin position="142"/>
        <end position="253"/>
    </location>
</feature>
<name>CRR41_ARATH</name>
<reference key="1">
    <citation type="journal article" date="1999" name="Nature">
        <title>Sequence and analysis of chromosome 4 of the plant Arabidopsis thaliana.</title>
        <authorList>
            <person name="Mayer K.F.X."/>
            <person name="Schueller C."/>
            <person name="Wambutt R."/>
            <person name="Murphy G."/>
            <person name="Volckaert G."/>
            <person name="Pohl T."/>
            <person name="Duesterhoeft A."/>
            <person name="Stiekema W."/>
            <person name="Entian K.-D."/>
            <person name="Terryn N."/>
            <person name="Harris B."/>
            <person name="Ansorge W."/>
            <person name="Brandt P."/>
            <person name="Grivell L.A."/>
            <person name="Rieger M."/>
            <person name="Weichselgartner M."/>
            <person name="de Simone V."/>
            <person name="Obermaier B."/>
            <person name="Mache R."/>
            <person name="Mueller M."/>
            <person name="Kreis M."/>
            <person name="Delseny M."/>
            <person name="Puigdomenech P."/>
            <person name="Watson M."/>
            <person name="Schmidtheini T."/>
            <person name="Reichert B."/>
            <person name="Portetelle D."/>
            <person name="Perez-Alonso M."/>
            <person name="Boutry M."/>
            <person name="Bancroft I."/>
            <person name="Vos P."/>
            <person name="Hoheisel J."/>
            <person name="Zimmermann W."/>
            <person name="Wedler H."/>
            <person name="Ridley P."/>
            <person name="Langham S.-A."/>
            <person name="McCullagh B."/>
            <person name="Bilham L."/>
            <person name="Robben J."/>
            <person name="van der Schueren J."/>
            <person name="Grymonprez B."/>
            <person name="Chuang Y.-J."/>
            <person name="Vandenbussche F."/>
            <person name="Braeken M."/>
            <person name="Weltjens I."/>
            <person name="Voet M."/>
            <person name="Bastiaens I."/>
            <person name="Aert R."/>
            <person name="Defoor E."/>
            <person name="Weitzenegger T."/>
            <person name="Bothe G."/>
            <person name="Ramsperger U."/>
            <person name="Hilbert H."/>
            <person name="Braun M."/>
            <person name="Holzer E."/>
            <person name="Brandt A."/>
            <person name="Peters S."/>
            <person name="van Staveren M."/>
            <person name="Dirkse W."/>
            <person name="Mooijman P."/>
            <person name="Klein Lankhorst R."/>
            <person name="Rose M."/>
            <person name="Hauf J."/>
            <person name="Koetter P."/>
            <person name="Berneiser S."/>
            <person name="Hempel S."/>
            <person name="Feldpausch M."/>
            <person name="Lamberth S."/>
            <person name="Van den Daele H."/>
            <person name="De Keyser A."/>
            <person name="Buysshaert C."/>
            <person name="Gielen J."/>
            <person name="Villarroel R."/>
            <person name="De Clercq R."/>
            <person name="van Montagu M."/>
            <person name="Rogers J."/>
            <person name="Cronin A."/>
            <person name="Quail M.A."/>
            <person name="Bray-Allen S."/>
            <person name="Clark L."/>
            <person name="Doggett J."/>
            <person name="Hall S."/>
            <person name="Kay M."/>
            <person name="Lennard N."/>
            <person name="McLay K."/>
            <person name="Mayes R."/>
            <person name="Pettett A."/>
            <person name="Rajandream M.A."/>
            <person name="Lyne M."/>
            <person name="Benes V."/>
            <person name="Rechmann S."/>
            <person name="Borkova D."/>
            <person name="Bloecker H."/>
            <person name="Scharfe M."/>
            <person name="Grimm M."/>
            <person name="Loehnert T.-H."/>
            <person name="Dose S."/>
            <person name="de Haan M."/>
            <person name="Maarse A.C."/>
            <person name="Schaefer M."/>
            <person name="Mueller-Auer S."/>
            <person name="Gabel C."/>
            <person name="Fuchs M."/>
            <person name="Fartmann B."/>
            <person name="Granderath K."/>
            <person name="Dauner D."/>
            <person name="Herzl A."/>
            <person name="Neumann S."/>
            <person name="Argiriou A."/>
            <person name="Vitale D."/>
            <person name="Liguori R."/>
            <person name="Piravandi E."/>
            <person name="Massenet O."/>
            <person name="Quigley F."/>
            <person name="Clabauld G."/>
            <person name="Muendlein A."/>
            <person name="Felber R."/>
            <person name="Schnabl S."/>
            <person name="Hiller R."/>
            <person name="Schmidt W."/>
            <person name="Lecharny A."/>
            <person name="Aubourg S."/>
            <person name="Chefdor F."/>
            <person name="Cooke R."/>
            <person name="Berger C."/>
            <person name="Monfort A."/>
            <person name="Casacuberta E."/>
            <person name="Gibbons T."/>
            <person name="Weber N."/>
            <person name="Vandenbol M."/>
            <person name="Bargues M."/>
            <person name="Terol J."/>
            <person name="Torres A."/>
            <person name="Perez-Perez A."/>
            <person name="Purnelle B."/>
            <person name="Bent E."/>
            <person name="Johnson S."/>
            <person name="Tacon D."/>
            <person name="Jesse T."/>
            <person name="Heijnen L."/>
            <person name="Schwarz S."/>
            <person name="Scholler P."/>
            <person name="Heber S."/>
            <person name="Francs P."/>
            <person name="Bielke C."/>
            <person name="Frishman D."/>
            <person name="Haase D."/>
            <person name="Lemcke K."/>
            <person name="Mewes H.-W."/>
            <person name="Stocker S."/>
            <person name="Zaccaria P."/>
            <person name="Bevan M."/>
            <person name="Wilson R.K."/>
            <person name="de la Bastide M."/>
            <person name="Habermann K."/>
            <person name="Parnell L."/>
            <person name="Dedhia N."/>
            <person name="Gnoj L."/>
            <person name="Schutz K."/>
            <person name="Huang E."/>
            <person name="Spiegel L."/>
            <person name="Sekhon M."/>
            <person name="Murray J."/>
            <person name="Sheet P."/>
            <person name="Cordes M."/>
            <person name="Abu-Threideh J."/>
            <person name="Stoneking T."/>
            <person name="Kalicki J."/>
            <person name="Graves T."/>
            <person name="Harmon G."/>
            <person name="Edwards J."/>
            <person name="Latreille P."/>
            <person name="Courtney L."/>
            <person name="Cloud J."/>
            <person name="Abbott A."/>
            <person name="Scott K."/>
            <person name="Johnson D."/>
            <person name="Minx P."/>
            <person name="Bentley D."/>
            <person name="Fulton B."/>
            <person name="Miller N."/>
            <person name="Greco T."/>
            <person name="Kemp K."/>
            <person name="Kramer J."/>
            <person name="Fulton L."/>
            <person name="Mardis E."/>
            <person name="Dante M."/>
            <person name="Pepin K."/>
            <person name="Hillier L.W."/>
            <person name="Nelson J."/>
            <person name="Spieth J."/>
            <person name="Ryan E."/>
            <person name="Andrews S."/>
            <person name="Geisel C."/>
            <person name="Layman D."/>
            <person name="Du H."/>
            <person name="Ali J."/>
            <person name="Berghoff A."/>
            <person name="Jones K."/>
            <person name="Drone K."/>
            <person name="Cotton M."/>
            <person name="Joshu C."/>
            <person name="Antonoiu B."/>
            <person name="Zidanic M."/>
            <person name="Strong C."/>
            <person name="Sun H."/>
            <person name="Lamar B."/>
            <person name="Yordan C."/>
            <person name="Ma P."/>
            <person name="Zhong J."/>
            <person name="Preston R."/>
            <person name="Vil D."/>
            <person name="Shekher M."/>
            <person name="Matero A."/>
            <person name="Shah R."/>
            <person name="Swaby I.K."/>
            <person name="O'Shaughnessy A."/>
            <person name="Rodriguez M."/>
            <person name="Hoffman J."/>
            <person name="Till S."/>
            <person name="Granat S."/>
            <person name="Shohdy N."/>
            <person name="Hasegawa A."/>
            <person name="Hameed A."/>
            <person name="Lodhi M."/>
            <person name="Johnson A."/>
            <person name="Chen E."/>
            <person name="Marra M.A."/>
            <person name="Martienssen R."/>
            <person name="McCombie W.R."/>
        </authorList>
    </citation>
    <scope>NUCLEOTIDE SEQUENCE [LARGE SCALE GENOMIC DNA]</scope>
    <source>
        <strain>cv. Columbia</strain>
    </source>
</reference>
<reference key="2">
    <citation type="journal article" date="2017" name="Plant J.">
        <title>Araport11: a complete reannotation of the Arabidopsis thaliana reference genome.</title>
        <authorList>
            <person name="Cheng C.Y."/>
            <person name="Krishnakumar V."/>
            <person name="Chan A.P."/>
            <person name="Thibaud-Nissen F."/>
            <person name="Schobel S."/>
            <person name="Town C.D."/>
        </authorList>
    </citation>
    <scope>GENOME REANNOTATION</scope>
    <source>
        <strain>cv. Columbia</strain>
    </source>
</reference>
<reference key="3">
    <citation type="submission" date="2004-09" db="EMBL/GenBank/DDBJ databases">
        <title>Large-scale analysis of RIKEN Arabidopsis full-length (RAFL) cDNAs.</title>
        <authorList>
            <person name="Totoki Y."/>
            <person name="Seki M."/>
            <person name="Ishida J."/>
            <person name="Nakajima M."/>
            <person name="Enju A."/>
            <person name="Kamiya A."/>
            <person name="Narusaka M."/>
            <person name="Shin-i T."/>
            <person name="Nakagawa M."/>
            <person name="Sakamoto N."/>
            <person name="Oishi K."/>
            <person name="Kohara Y."/>
            <person name="Kobayashi M."/>
            <person name="Toyoda A."/>
            <person name="Sakaki Y."/>
            <person name="Sakurai T."/>
            <person name="Iida K."/>
            <person name="Akiyama K."/>
            <person name="Satou M."/>
            <person name="Toyoda T."/>
            <person name="Konagaya A."/>
            <person name="Carninci P."/>
            <person name="Kawai J."/>
            <person name="Hayashizaki Y."/>
            <person name="Shinozaki K."/>
        </authorList>
    </citation>
    <scope>NUCLEOTIDE SEQUENCE [LARGE SCALE MRNA] OF 1-256</scope>
    <source>
        <strain>cv. Columbia</strain>
    </source>
</reference>
<reference key="4">
    <citation type="journal article" date="2001" name="Plant Physiol.">
        <title>A superfamily of proteins with novel cysteine-rich repeats.</title>
        <authorList>
            <person name="Chen Z."/>
        </authorList>
    </citation>
    <scope>GENE FAMILY ORGANIZATION</scope>
    <scope>NOMENCLATURE</scope>
</reference>
<keyword id="KW-1185">Reference proteome</keyword>
<keyword id="KW-0677">Repeat</keyword>
<keyword id="KW-0964">Secreted</keyword>
<keyword id="KW-0732">Signal</keyword>
<proteinExistence type="evidence at transcript level"/>
<comment type="subcellular location">
    <subcellularLocation>
        <location evidence="3">Secreted</location>
    </subcellularLocation>
</comment>
<comment type="similarity">
    <text evidence="3">Belongs to the cysteine-rich repeat secretory protein family.</text>
</comment>
<comment type="sequence caution" evidence="3">
    <conflict type="erroneous initiation">
        <sequence resource="EMBL-CDS" id="BAD43562"/>
    </conflict>
    <text>Extended N-terminus.</text>
</comment>
<sequence length="266" mass="30190">MSSVFGSVHILAMIAIQLLLTHSVSSLNLTNAYLHHKCSNTQGKYKQGSAFEKNLNLVLSTITSIGNFRDGFRYTEEGEDPNNVFVMFQCRGDSYWSKCPPCISTAVSGLRRRCPRNKGAIIWYDQCLLKISSVASFNKIDYENDFYLSNPNNMSDRGLFNKETSALLEKLAYKASDRNNLDGKQLVLYAAGEKRIGTKKVYAMVQCTKDLIFTKCFECLEGILRKFPQCCDGKRGGRVFGTSCNFRYELYPFLRNYSNSTMRAPY</sequence>
<dbReference type="EMBL" id="AL080254">
    <property type="protein sequence ID" value="CAB45833.1"/>
    <property type="molecule type" value="Genomic_DNA"/>
</dbReference>
<dbReference type="EMBL" id="AL161553">
    <property type="protein sequence ID" value="CAB79067.1"/>
    <property type="molecule type" value="Genomic_DNA"/>
</dbReference>
<dbReference type="EMBL" id="CP002687">
    <property type="protein sequence ID" value="AEE84352.2"/>
    <property type="molecule type" value="Genomic_DNA"/>
</dbReference>
<dbReference type="EMBL" id="AK175799">
    <property type="protein sequence ID" value="BAD43562.1"/>
    <property type="status" value="ALT_INIT"/>
    <property type="molecule type" value="mRNA"/>
</dbReference>
<dbReference type="PIR" id="T10609">
    <property type="entry name" value="T10609"/>
</dbReference>
<dbReference type="RefSeq" id="NP_001320011.1">
    <property type="nucleotide sequence ID" value="NM_001341442.1"/>
</dbReference>
<dbReference type="RefSeq" id="NP_001320012.1">
    <property type="nucleotide sequence ID" value="NM_001341444.1"/>
</dbReference>
<dbReference type="RefSeq" id="NP_001328923.1">
    <property type="nucleotide sequence ID" value="NM_001341450.1"/>
</dbReference>
<dbReference type="RefSeq" id="NP_193799.3">
    <property type="nucleotide sequence ID" value="NM_118185.3"/>
</dbReference>
<dbReference type="RefSeq" id="NP_567605.3">
    <property type="nucleotide sequence ID" value="NM_118174.3"/>
</dbReference>
<dbReference type="RefSeq" id="NP_567606.3">
    <property type="nucleotide sequence ID" value="NM_118175.3"/>
</dbReference>
<dbReference type="RefSeq" id="NP_567607.3">
    <property type="nucleotide sequence ID" value="NM_118176.3"/>
</dbReference>
<dbReference type="SMR" id="Q9SVI0"/>
<dbReference type="STRING" id="3702.Q9SVI0"/>
<dbReference type="PaxDb" id="3702-AT4G20670.1"/>
<dbReference type="EnsemblPlants" id="AT4G20670.1">
    <property type="protein sequence ID" value="AT4G20670.1"/>
    <property type="gene ID" value="AT4G20670"/>
</dbReference>
<dbReference type="GeneID" id="827814"/>
<dbReference type="Gramene" id="AT4G20670.1">
    <property type="protein sequence ID" value="AT4G20670.1"/>
    <property type="gene ID" value="AT4G20670"/>
</dbReference>
<dbReference type="KEGG" id="ath:AT4G20530"/>
<dbReference type="KEGG" id="ath:AT4G20540"/>
<dbReference type="KEGG" id="ath:AT4G20550"/>
<dbReference type="KEGG" id="ath:AT4G20560"/>
<dbReference type="KEGG" id="ath:AT4G20570"/>
<dbReference type="KEGG" id="ath:AT4G20645"/>
<dbReference type="KEGG" id="ath:AT4G20670"/>
<dbReference type="Araport" id="AT4G20670"/>
<dbReference type="TAIR" id="AT4G20670"/>
<dbReference type="eggNOG" id="ENOG502QPWH">
    <property type="taxonomic scope" value="Eukaryota"/>
</dbReference>
<dbReference type="HOGENOM" id="CLU_000288_35_0_1"/>
<dbReference type="InParanoid" id="Q9SVI0"/>
<dbReference type="PhylomeDB" id="Q9SVI0"/>
<dbReference type="PRO" id="PR:Q9SVI0"/>
<dbReference type="Proteomes" id="UP000006548">
    <property type="component" value="Chromosome 4"/>
</dbReference>
<dbReference type="GO" id="GO:0005576">
    <property type="term" value="C:extracellular region"/>
    <property type="evidence" value="ECO:0007669"/>
    <property type="project" value="UniProtKB-SubCell"/>
</dbReference>
<dbReference type="CDD" id="cd23509">
    <property type="entry name" value="Gnk2-like"/>
    <property type="match status" value="2"/>
</dbReference>
<dbReference type="FunFam" id="3.30.430.20:FF:000002">
    <property type="entry name" value="Cysteine-rich receptor-like protein kinase 10"/>
    <property type="match status" value="1"/>
</dbReference>
<dbReference type="Gene3D" id="3.30.430.20">
    <property type="entry name" value="Gnk2 domain, C-X8-C-X2-C motif"/>
    <property type="match status" value="2"/>
</dbReference>
<dbReference type="InterPro" id="IPR050581">
    <property type="entry name" value="CRR_secretory_protein"/>
</dbReference>
<dbReference type="InterPro" id="IPR002902">
    <property type="entry name" value="GNK2"/>
</dbReference>
<dbReference type="InterPro" id="IPR038408">
    <property type="entry name" value="GNK2_sf"/>
</dbReference>
<dbReference type="PANTHER" id="PTHR32411:SF54">
    <property type="entry name" value="CYSTEINE-RICH REPEAT SECRETORY PROTEIN 29-RELATED"/>
    <property type="match status" value="1"/>
</dbReference>
<dbReference type="PANTHER" id="PTHR32411">
    <property type="entry name" value="CYSTEINE-RICH REPEAT SECRETORY PROTEIN 38-RELATED"/>
    <property type="match status" value="1"/>
</dbReference>
<dbReference type="Pfam" id="PF01657">
    <property type="entry name" value="Stress-antifung"/>
    <property type="match status" value="2"/>
</dbReference>
<dbReference type="PROSITE" id="PS51473">
    <property type="entry name" value="GNK2"/>
    <property type="match status" value="2"/>
</dbReference>